<dbReference type="EC" id="3.2.2.23" evidence="2"/>
<dbReference type="EC" id="4.2.99.18" evidence="2"/>
<dbReference type="EMBL" id="FM200053">
    <property type="protein sequence ID" value="CAR61607.1"/>
    <property type="molecule type" value="Genomic_DNA"/>
</dbReference>
<dbReference type="RefSeq" id="WP_001114515.1">
    <property type="nucleotide sequence ID" value="NC_011147.1"/>
</dbReference>
<dbReference type="SMR" id="B5BI09"/>
<dbReference type="KEGG" id="sek:SSPA3341"/>
<dbReference type="HOGENOM" id="CLU_038423_1_1_6"/>
<dbReference type="Proteomes" id="UP000001869">
    <property type="component" value="Chromosome"/>
</dbReference>
<dbReference type="GO" id="GO:0034039">
    <property type="term" value="F:8-oxo-7,8-dihydroguanine DNA N-glycosylase activity"/>
    <property type="evidence" value="ECO:0007669"/>
    <property type="project" value="TreeGrafter"/>
</dbReference>
<dbReference type="GO" id="GO:0140078">
    <property type="term" value="F:class I DNA-(apurinic or apyrimidinic site) endonuclease activity"/>
    <property type="evidence" value="ECO:0007669"/>
    <property type="project" value="UniProtKB-EC"/>
</dbReference>
<dbReference type="GO" id="GO:0003684">
    <property type="term" value="F:damaged DNA binding"/>
    <property type="evidence" value="ECO:0007669"/>
    <property type="project" value="InterPro"/>
</dbReference>
<dbReference type="GO" id="GO:0008270">
    <property type="term" value="F:zinc ion binding"/>
    <property type="evidence" value="ECO:0007669"/>
    <property type="project" value="UniProtKB-UniRule"/>
</dbReference>
<dbReference type="GO" id="GO:0006284">
    <property type="term" value="P:base-excision repair"/>
    <property type="evidence" value="ECO:0007669"/>
    <property type="project" value="InterPro"/>
</dbReference>
<dbReference type="CDD" id="cd08966">
    <property type="entry name" value="EcFpg-like_N"/>
    <property type="match status" value="1"/>
</dbReference>
<dbReference type="FunFam" id="1.10.8.50:FF:000003">
    <property type="entry name" value="Formamidopyrimidine-DNA glycosylase"/>
    <property type="match status" value="1"/>
</dbReference>
<dbReference type="FunFam" id="3.20.190.10:FF:000001">
    <property type="entry name" value="Formamidopyrimidine-DNA glycosylase"/>
    <property type="match status" value="1"/>
</dbReference>
<dbReference type="Gene3D" id="1.10.8.50">
    <property type="match status" value="1"/>
</dbReference>
<dbReference type="Gene3D" id="3.20.190.10">
    <property type="entry name" value="MutM-like, N-terminal"/>
    <property type="match status" value="1"/>
</dbReference>
<dbReference type="HAMAP" id="MF_00103">
    <property type="entry name" value="Fapy_DNA_glycosyl"/>
    <property type="match status" value="1"/>
</dbReference>
<dbReference type="InterPro" id="IPR015886">
    <property type="entry name" value="DNA_glyclase/AP_lyase_DNA-bd"/>
</dbReference>
<dbReference type="InterPro" id="IPR015887">
    <property type="entry name" value="DNA_glyclase_Znf_dom_DNA_BS"/>
</dbReference>
<dbReference type="InterPro" id="IPR020629">
    <property type="entry name" value="Formamido-pyr_DNA_Glyclase"/>
</dbReference>
<dbReference type="InterPro" id="IPR012319">
    <property type="entry name" value="FPG_cat"/>
</dbReference>
<dbReference type="InterPro" id="IPR035937">
    <property type="entry name" value="MutM-like_N-ter"/>
</dbReference>
<dbReference type="InterPro" id="IPR010979">
    <property type="entry name" value="Ribosomal_uS13-like_H2TH"/>
</dbReference>
<dbReference type="InterPro" id="IPR000214">
    <property type="entry name" value="Znf_DNA_glyclase/AP_lyase"/>
</dbReference>
<dbReference type="InterPro" id="IPR010663">
    <property type="entry name" value="Znf_FPG/IleRS"/>
</dbReference>
<dbReference type="NCBIfam" id="TIGR00577">
    <property type="entry name" value="fpg"/>
    <property type="match status" value="1"/>
</dbReference>
<dbReference type="NCBIfam" id="NF002211">
    <property type="entry name" value="PRK01103.1"/>
    <property type="match status" value="1"/>
</dbReference>
<dbReference type="PANTHER" id="PTHR22993">
    <property type="entry name" value="FORMAMIDOPYRIMIDINE-DNA GLYCOSYLASE"/>
    <property type="match status" value="1"/>
</dbReference>
<dbReference type="PANTHER" id="PTHR22993:SF9">
    <property type="entry name" value="FORMAMIDOPYRIMIDINE-DNA GLYCOSYLASE"/>
    <property type="match status" value="1"/>
</dbReference>
<dbReference type="Pfam" id="PF01149">
    <property type="entry name" value="Fapy_DNA_glyco"/>
    <property type="match status" value="1"/>
</dbReference>
<dbReference type="Pfam" id="PF06831">
    <property type="entry name" value="H2TH"/>
    <property type="match status" value="1"/>
</dbReference>
<dbReference type="Pfam" id="PF06827">
    <property type="entry name" value="zf-FPG_IleRS"/>
    <property type="match status" value="1"/>
</dbReference>
<dbReference type="SMART" id="SM00898">
    <property type="entry name" value="Fapy_DNA_glyco"/>
    <property type="match status" value="1"/>
</dbReference>
<dbReference type="SMART" id="SM01232">
    <property type="entry name" value="H2TH"/>
    <property type="match status" value="1"/>
</dbReference>
<dbReference type="SUPFAM" id="SSF57716">
    <property type="entry name" value="Glucocorticoid receptor-like (DNA-binding domain)"/>
    <property type="match status" value="1"/>
</dbReference>
<dbReference type="SUPFAM" id="SSF81624">
    <property type="entry name" value="N-terminal domain of MutM-like DNA repair proteins"/>
    <property type="match status" value="1"/>
</dbReference>
<dbReference type="SUPFAM" id="SSF46946">
    <property type="entry name" value="S13-like H2TH domain"/>
    <property type="match status" value="1"/>
</dbReference>
<dbReference type="PROSITE" id="PS51068">
    <property type="entry name" value="FPG_CAT"/>
    <property type="match status" value="1"/>
</dbReference>
<dbReference type="PROSITE" id="PS01242">
    <property type="entry name" value="ZF_FPG_1"/>
    <property type="match status" value="1"/>
</dbReference>
<dbReference type="PROSITE" id="PS51066">
    <property type="entry name" value="ZF_FPG_2"/>
    <property type="match status" value="1"/>
</dbReference>
<protein>
    <recommendedName>
        <fullName evidence="2">Formamidopyrimidine-DNA glycosylase</fullName>
        <shortName evidence="2">Fapy-DNA glycosylase</shortName>
        <ecNumber evidence="2">3.2.2.23</ecNumber>
    </recommendedName>
    <alternativeName>
        <fullName evidence="2">DNA-(apurinic or apyrimidinic site) lyase MutM</fullName>
        <shortName evidence="2">AP lyase MutM</shortName>
        <ecNumber evidence="2">4.2.99.18</ecNumber>
    </alternativeName>
</protein>
<sequence>MPELPEVETSRRGIEPHLVGATILHAHIRNGRLRWPVSDEIYRLSDTPVLSVQRRAKYLLLELPDGWIIIHLGMSGSLRILSEALPAEKHDHVDLVMSNGKILRYTDPRRFGAWLWTKELEGHNVLAHLGPEPLSDEFNGEYLQQKCAKKKTAIKPWLMDNKLVVGVGNIYASESLFAAGIHPDRLASSLSTEECDLLARVIKAVLLRSIEQGGTTLKDFLQSDGKPGYFAQELQVYGRKGEPCRVCGTPIVATKHAQRATFYCRHCQK</sequence>
<evidence type="ECO:0000250" key="1"/>
<evidence type="ECO:0000255" key="2">
    <source>
        <dbReference type="HAMAP-Rule" id="MF_00103"/>
    </source>
</evidence>
<reference key="1">
    <citation type="journal article" date="2009" name="BMC Genomics">
        <title>Pseudogene accumulation in the evolutionary histories of Salmonella enterica serovars Paratyphi A and Typhi.</title>
        <authorList>
            <person name="Holt K.E."/>
            <person name="Thomson N.R."/>
            <person name="Wain J."/>
            <person name="Langridge G.C."/>
            <person name="Hasan R."/>
            <person name="Bhutta Z.A."/>
            <person name="Quail M.A."/>
            <person name="Norbertczak H."/>
            <person name="Walker D."/>
            <person name="Simmonds M."/>
            <person name="White B."/>
            <person name="Bason N."/>
            <person name="Mungall K."/>
            <person name="Dougan G."/>
            <person name="Parkhill J."/>
        </authorList>
    </citation>
    <scope>NUCLEOTIDE SEQUENCE [LARGE SCALE GENOMIC DNA]</scope>
    <source>
        <strain>AKU_12601</strain>
    </source>
</reference>
<comment type="function">
    <text evidence="2">Involved in base excision repair of DNA damaged by oxidation or by mutagenic agents. Acts as a DNA glycosylase that recognizes and removes damaged bases. Has a preference for oxidized purines, such as 7,8-dihydro-8-oxoguanine (8-oxoG). Has AP (apurinic/apyrimidinic) lyase activity and introduces nicks in the DNA strand. Cleaves the DNA backbone by beta-delta elimination to generate a single-strand break at the site of the removed base with both 3'- and 5'-phosphates.</text>
</comment>
<comment type="catalytic activity">
    <reaction evidence="2">
        <text>Hydrolysis of DNA containing ring-opened 7-methylguanine residues, releasing 2,6-diamino-4-hydroxy-5-(N-methyl)formamidopyrimidine.</text>
        <dbReference type="EC" id="3.2.2.23"/>
    </reaction>
</comment>
<comment type="catalytic activity">
    <reaction evidence="2">
        <text>2'-deoxyribonucleotide-(2'-deoxyribose 5'-phosphate)-2'-deoxyribonucleotide-DNA = a 3'-end 2'-deoxyribonucleotide-(2,3-dehydro-2,3-deoxyribose 5'-phosphate)-DNA + a 5'-end 5'-phospho-2'-deoxyribonucleoside-DNA + H(+)</text>
        <dbReference type="Rhea" id="RHEA:66592"/>
        <dbReference type="Rhea" id="RHEA-COMP:13180"/>
        <dbReference type="Rhea" id="RHEA-COMP:16897"/>
        <dbReference type="Rhea" id="RHEA-COMP:17067"/>
        <dbReference type="ChEBI" id="CHEBI:15378"/>
        <dbReference type="ChEBI" id="CHEBI:136412"/>
        <dbReference type="ChEBI" id="CHEBI:157695"/>
        <dbReference type="ChEBI" id="CHEBI:167181"/>
        <dbReference type="EC" id="4.2.99.18"/>
    </reaction>
</comment>
<comment type="cofactor">
    <cofactor evidence="2">
        <name>Zn(2+)</name>
        <dbReference type="ChEBI" id="CHEBI:29105"/>
    </cofactor>
    <text evidence="2">Binds 1 zinc ion per subunit.</text>
</comment>
<comment type="subunit">
    <text evidence="2">Monomer.</text>
</comment>
<comment type="similarity">
    <text evidence="2">Belongs to the FPG family.</text>
</comment>
<gene>
    <name evidence="2" type="primary">mutM</name>
    <name evidence="2" type="synonym">fpg</name>
    <name type="ordered locus">SSPA3341</name>
</gene>
<keyword id="KW-0227">DNA damage</keyword>
<keyword id="KW-0234">DNA repair</keyword>
<keyword id="KW-0238">DNA-binding</keyword>
<keyword id="KW-0326">Glycosidase</keyword>
<keyword id="KW-0378">Hydrolase</keyword>
<keyword id="KW-0456">Lyase</keyword>
<keyword id="KW-0479">Metal-binding</keyword>
<keyword id="KW-0511">Multifunctional enzyme</keyword>
<keyword id="KW-0862">Zinc</keyword>
<keyword id="KW-0863">Zinc-finger</keyword>
<feature type="initiator methionine" description="Removed" evidence="1">
    <location>
        <position position="1"/>
    </location>
</feature>
<feature type="chain" id="PRO_1000094076" description="Formamidopyrimidine-DNA glycosylase">
    <location>
        <begin position="2"/>
        <end position="269"/>
    </location>
</feature>
<feature type="zinc finger region" description="FPG-type" evidence="2">
    <location>
        <begin position="235"/>
        <end position="269"/>
    </location>
</feature>
<feature type="active site" description="Schiff-base intermediate with DNA" evidence="2">
    <location>
        <position position="2"/>
    </location>
</feature>
<feature type="active site" description="Proton donor" evidence="2">
    <location>
        <position position="3"/>
    </location>
</feature>
<feature type="active site" description="Proton donor; for beta-elimination activity" evidence="2">
    <location>
        <position position="57"/>
    </location>
</feature>
<feature type="active site" description="Proton donor; for delta-elimination activity" evidence="2">
    <location>
        <position position="259"/>
    </location>
</feature>
<feature type="binding site" evidence="2">
    <location>
        <position position="90"/>
    </location>
    <ligand>
        <name>DNA</name>
        <dbReference type="ChEBI" id="CHEBI:16991"/>
    </ligand>
</feature>
<feature type="binding site" evidence="2">
    <location>
        <position position="109"/>
    </location>
    <ligand>
        <name>DNA</name>
        <dbReference type="ChEBI" id="CHEBI:16991"/>
    </ligand>
</feature>
<feature type="binding site" evidence="2">
    <location>
        <position position="150"/>
    </location>
    <ligand>
        <name>DNA</name>
        <dbReference type="ChEBI" id="CHEBI:16991"/>
    </ligand>
</feature>
<accession>B5BI09</accession>
<proteinExistence type="inferred from homology"/>
<organism>
    <name type="scientific">Salmonella paratyphi A (strain AKU_12601)</name>
    <dbReference type="NCBI Taxonomy" id="554290"/>
    <lineage>
        <taxon>Bacteria</taxon>
        <taxon>Pseudomonadati</taxon>
        <taxon>Pseudomonadota</taxon>
        <taxon>Gammaproteobacteria</taxon>
        <taxon>Enterobacterales</taxon>
        <taxon>Enterobacteriaceae</taxon>
        <taxon>Salmonella</taxon>
    </lineage>
</organism>
<name>FPG_SALPK</name>